<geneLocation type="plasmid">
    <name>pAQ1</name>
</geneLocation>
<accession>Q52149</accession>
<gene>
    <name type="ordered locus">SYNPCC7002_B0001</name>
</gene>
<feature type="chain" id="PRO_0000379512" description="Uncharacterized protein SYNPCC7002_B0001">
    <location>
        <begin position="1"/>
        <end position="1000"/>
    </location>
</feature>
<feature type="region of interest" description="Disordered" evidence="1">
    <location>
        <begin position="787"/>
        <end position="812"/>
    </location>
</feature>
<feature type="compositionally biased region" description="Basic and acidic residues" evidence="1">
    <location>
        <begin position="787"/>
        <end position="809"/>
    </location>
</feature>
<protein>
    <recommendedName>
        <fullName>Uncharacterized protein SYNPCC7002_B0001</fullName>
    </recommendedName>
    <alternativeName>
        <fullName>ORF 1</fullName>
    </alternativeName>
    <alternativeName>
        <fullName>ORF943</fullName>
    </alternativeName>
</protein>
<name>Y3001_PICP2</name>
<keyword id="KW-0614">Plasmid</keyword>
<keyword id="KW-1185">Reference proteome</keyword>
<proteinExistence type="predicted"/>
<reference key="1">
    <citation type="journal article" date="1998" name="DNA Res.">
        <title>Nucleotide sequence of plasmid pAQ1 of marine cyanobacterium Synechococcus sp. PCC7002.</title>
        <authorList>
            <person name="Akiyama H."/>
            <person name="Kanai S."/>
            <person name="Hirano M."/>
            <person name="Miyasaka H."/>
        </authorList>
    </citation>
    <scope>NUCLEOTIDE SEQUENCE [GENOMIC DNA]</scope>
</reference>
<reference key="2">
    <citation type="submission" date="2008-02" db="EMBL/GenBank/DDBJ databases">
        <title>Complete sequence of Synechococcus sp. PCC 7002.</title>
        <authorList>
            <person name="Li T."/>
            <person name="Zhao J."/>
            <person name="Zhao C."/>
            <person name="Liu Z."/>
            <person name="Zhao F."/>
            <person name="Marquardt J."/>
            <person name="Nomura C.T."/>
            <person name="Persson S."/>
            <person name="Detter J.C."/>
            <person name="Richardson P.M."/>
            <person name="Lanz C."/>
            <person name="Schuster S.C."/>
            <person name="Wang J."/>
            <person name="Li S."/>
            <person name="Huang X."/>
            <person name="Cai T."/>
            <person name="Yu Z."/>
            <person name="Luo J."/>
            <person name="Zhao J."/>
            <person name="Bryant D.A."/>
        </authorList>
    </citation>
    <scope>NUCLEOTIDE SEQUENCE [LARGE SCALE GENOMIC DNA]</scope>
    <source>
        <strain>ATCC 27264 / PCC 7002 / PR-6</strain>
    </source>
</reference>
<organism>
    <name type="scientific">Picosynechococcus sp. (strain ATCC 27264 / PCC 7002 / PR-6)</name>
    <name type="common">Agmenellum quadruplicatum</name>
    <dbReference type="NCBI Taxonomy" id="32049"/>
    <lineage>
        <taxon>Bacteria</taxon>
        <taxon>Bacillati</taxon>
        <taxon>Cyanobacteriota</taxon>
        <taxon>Cyanophyceae</taxon>
        <taxon>Oscillatoriophycideae</taxon>
        <taxon>Chroococcales</taxon>
        <taxon>Geminocystaceae</taxon>
        <taxon>Picosynechococcus</taxon>
    </lineage>
</organism>
<comment type="sequence caution" evidence="2">
    <conflict type="erroneous initiation">
        <sequence resource="EMBL-CDS" id="ACB00843"/>
    </conflict>
</comment>
<comment type="sequence caution" evidence="2">
    <conflict type="erroneous initiation">
        <sequence resource="EMBL-CDS" id="BAA03080"/>
    </conflict>
</comment>
<sequence>MIVSDNFTSSSNTGADLASSVSENRSHFIAESHYREWVEGSGVAPEIARLNVRSLSGMTPYEYLLYSDEPALRRNDGRLRDTWLKRYAFVEHGGWWCSGIDIKTGKDSLWGCFKGDRPRKDREDKKPIKYEHPPRVATEIFTLKVDRGTWRKIAKRHKVELPETDQGFWEWVLAHPELPIIITEGAKKAGALLTAGYCAIGLPGIYNGYRTPKNDHGEPMRQLRHLIPELDLLAKNNRAIAFCFDQDKKPKTIKAVNGAIQTTGALLEKAGAKVSVITWHQDAKGVDDLIVEHGAKALHNRYKHRKPLAVWEMDNLTDITTQVDLTVDQRYLDIDPRAIPKDAQIIFIKSAKGTGKTEWLGKIVKLAQDDCARVLVLTHRIQLAKELARRLDIDHISELDSSPTGGALGMAMCIDSLHPDSQAHFNFMEWHGAHIVLDEIEQVLGHALGSSTCTQDRAKILETFYNLILYALRTGGKLYCSDADLSPISYELIKYILDGCEFKPFTILNTYKPCLEQQRDLFFYEGNDPRDLLTNLRQAIENGEKTLVFTAAQKTASTYSTQNLESLFREKYPDKRILRIDAESVAEPGHPAYGCIDSLNAILPLYDIVLCSPAVETGVSIDIKDHFDSVWGMGSGVQTVNGFCQGLERLRDNVPRHVWIPKFSPHSNRIANGGYTAKAIARDQHRYAELTHKLIGEHAAECSGLEDSLKPFLWAYCRYAALANRGFGSYREAILNKLLSEGYVQKDLSEIDPALAKDYRDELKAVKDHNYLQERVAISKVENPDDRQYEKLKRQRAKSETERHQERHGKLSRSYGLTVTPELVEKDDDGWYSQLQLEYYLTVGKAFCSARDRAKYDQLQHEGFVFKPDINRRSLSPKIHLLELLNIHQFLKPGVTFTGASLEGFKENCLRYAKPIKWILGRTITDKMSPLEIAQALLGKLDRKLEYKGRFGSRDNRQRVYEAIAPNDQREKVFAHWLQRDQAKLGAVSNPCINRFIQEA</sequence>
<dbReference type="EMBL" id="D13972">
    <property type="protein sequence ID" value="BAA03080.1"/>
    <property type="status" value="ALT_INIT"/>
    <property type="molecule type" value="Genomic_DNA"/>
</dbReference>
<dbReference type="EMBL" id="CP000952">
    <property type="protein sequence ID" value="ACB00843.1"/>
    <property type="status" value="ALT_INIT"/>
    <property type="molecule type" value="Genomic_DNA"/>
</dbReference>
<dbReference type="RefSeq" id="WP_071819492.1">
    <property type="nucleotide sequence ID" value="NC_010476.1"/>
</dbReference>
<dbReference type="KEGG" id="syp:SYNPCC7002_B0001"/>
<dbReference type="HOGENOM" id="CLU_004699_0_0_3"/>
<dbReference type="Proteomes" id="UP000001688">
    <property type="component" value="Plasmid pAQ1"/>
</dbReference>
<dbReference type="CDD" id="cd01029">
    <property type="entry name" value="TOPRIM_primases"/>
    <property type="match status" value="1"/>
</dbReference>
<dbReference type="InterPro" id="IPR024385">
    <property type="entry name" value="DUF3854"/>
</dbReference>
<dbReference type="InterPro" id="IPR027417">
    <property type="entry name" value="P-loop_NTPase"/>
</dbReference>
<dbReference type="InterPro" id="IPR049996">
    <property type="entry name" value="Slr7037-like"/>
</dbReference>
<dbReference type="InterPro" id="IPR034154">
    <property type="entry name" value="TOPRIM_DnaG/twinkle"/>
</dbReference>
<dbReference type="NCBIfam" id="NF042913">
    <property type="entry name" value="CyRepA1"/>
    <property type="match status" value="1"/>
</dbReference>
<dbReference type="PANTHER" id="PTHR34985">
    <property type="entry name" value="SLR0554 PROTEIN"/>
    <property type="match status" value="1"/>
</dbReference>
<dbReference type="PANTHER" id="PTHR34985:SF1">
    <property type="entry name" value="SLR0554 PROTEIN"/>
    <property type="match status" value="1"/>
</dbReference>
<dbReference type="Pfam" id="PF12965">
    <property type="entry name" value="DUF3854"/>
    <property type="match status" value="1"/>
</dbReference>
<dbReference type="SUPFAM" id="SSF52540">
    <property type="entry name" value="P-loop containing nucleoside triphosphate hydrolases"/>
    <property type="match status" value="1"/>
</dbReference>
<evidence type="ECO:0000256" key="1">
    <source>
        <dbReference type="SAM" id="MobiDB-lite"/>
    </source>
</evidence>
<evidence type="ECO:0000305" key="2"/>